<organism>
    <name type="scientific">Wolbachia sp. subsp. Brugia malayi (strain TRS)</name>
    <dbReference type="NCBI Taxonomy" id="292805"/>
    <lineage>
        <taxon>Bacteria</taxon>
        <taxon>Pseudomonadati</taxon>
        <taxon>Pseudomonadota</taxon>
        <taxon>Alphaproteobacteria</taxon>
        <taxon>Rickettsiales</taxon>
        <taxon>Anaplasmataceae</taxon>
        <taxon>Wolbachieae</taxon>
        <taxon>Wolbachia</taxon>
    </lineage>
</organism>
<sequence length="243" mass="27400">MGDTPFKATSMEDLNDTISKIINYRFKNDAILEEALTHPSLNKRNSKNQIENYERLEFLGDSILNMIVSAILFRLFPKEKEGALARRKTDLVCGNTIANVAKEIKLGNFIIMNNSERCNGGKRNLKNLENALEALIGAIYIDGGFANVKKFVTKHWEERAKGMLSLPQDPKTSLQEWTQKNKLPLPEYELMKQTGPAHSPEFTISICIENYGKVFACASSKKVAEQKAAELMLEKINNSEKTI</sequence>
<name>RNC_WOLTR</name>
<proteinExistence type="inferred from homology"/>
<evidence type="ECO:0000255" key="1">
    <source>
        <dbReference type="HAMAP-Rule" id="MF_00104"/>
    </source>
</evidence>
<protein>
    <recommendedName>
        <fullName evidence="1">Ribonuclease 3</fullName>
        <ecNumber evidence="1">3.1.26.3</ecNumber>
    </recommendedName>
    <alternativeName>
        <fullName evidence="1">Ribonuclease III</fullName>
        <shortName evidence="1">RNase III</shortName>
    </alternativeName>
</protein>
<gene>
    <name evidence="1" type="primary">rnc</name>
    <name type="ordered locus">Wbm0099</name>
</gene>
<dbReference type="EC" id="3.1.26.3" evidence="1"/>
<dbReference type="EMBL" id="AE017321">
    <property type="protein sequence ID" value="AAW70691.1"/>
    <property type="molecule type" value="Genomic_DNA"/>
</dbReference>
<dbReference type="SMR" id="Q5GTI3"/>
<dbReference type="STRING" id="292805.Wbm0099"/>
<dbReference type="KEGG" id="wbm:Wbm0099"/>
<dbReference type="eggNOG" id="COG0571">
    <property type="taxonomic scope" value="Bacteria"/>
</dbReference>
<dbReference type="HOGENOM" id="CLU_000907_1_1_5"/>
<dbReference type="Proteomes" id="UP000000534">
    <property type="component" value="Chromosome"/>
</dbReference>
<dbReference type="GO" id="GO:0005737">
    <property type="term" value="C:cytoplasm"/>
    <property type="evidence" value="ECO:0007669"/>
    <property type="project" value="UniProtKB-SubCell"/>
</dbReference>
<dbReference type="GO" id="GO:0003725">
    <property type="term" value="F:double-stranded RNA binding"/>
    <property type="evidence" value="ECO:0007669"/>
    <property type="project" value="TreeGrafter"/>
</dbReference>
<dbReference type="GO" id="GO:0046872">
    <property type="term" value="F:metal ion binding"/>
    <property type="evidence" value="ECO:0007669"/>
    <property type="project" value="UniProtKB-KW"/>
</dbReference>
<dbReference type="GO" id="GO:0004525">
    <property type="term" value="F:ribonuclease III activity"/>
    <property type="evidence" value="ECO:0007669"/>
    <property type="project" value="UniProtKB-UniRule"/>
</dbReference>
<dbReference type="GO" id="GO:0019843">
    <property type="term" value="F:rRNA binding"/>
    <property type="evidence" value="ECO:0007669"/>
    <property type="project" value="UniProtKB-KW"/>
</dbReference>
<dbReference type="GO" id="GO:0006397">
    <property type="term" value="P:mRNA processing"/>
    <property type="evidence" value="ECO:0007669"/>
    <property type="project" value="UniProtKB-UniRule"/>
</dbReference>
<dbReference type="GO" id="GO:0010468">
    <property type="term" value="P:regulation of gene expression"/>
    <property type="evidence" value="ECO:0007669"/>
    <property type="project" value="TreeGrafter"/>
</dbReference>
<dbReference type="GO" id="GO:0006364">
    <property type="term" value="P:rRNA processing"/>
    <property type="evidence" value="ECO:0007669"/>
    <property type="project" value="UniProtKB-UniRule"/>
</dbReference>
<dbReference type="GO" id="GO:0008033">
    <property type="term" value="P:tRNA processing"/>
    <property type="evidence" value="ECO:0007669"/>
    <property type="project" value="UniProtKB-KW"/>
</dbReference>
<dbReference type="CDD" id="cd10845">
    <property type="entry name" value="DSRM_RNAse_III_family"/>
    <property type="match status" value="1"/>
</dbReference>
<dbReference type="CDD" id="cd00593">
    <property type="entry name" value="RIBOc"/>
    <property type="match status" value="1"/>
</dbReference>
<dbReference type="FunFam" id="1.10.1520.10:FF:000001">
    <property type="entry name" value="Ribonuclease 3"/>
    <property type="match status" value="1"/>
</dbReference>
<dbReference type="FunFam" id="3.30.160.20:FF:000003">
    <property type="entry name" value="Ribonuclease 3"/>
    <property type="match status" value="1"/>
</dbReference>
<dbReference type="Gene3D" id="3.30.160.20">
    <property type="match status" value="1"/>
</dbReference>
<dbReference type="Gene3D" id="1.10.1520.10">
    <property type="entry name" value="Ribonuclease III domain"/>
    <property type="match status" value="1"/>
</dbReference>
<dbReference type="HAMAP" id="MF_00104">
    <property type="entry name" value="RNase_III"/>
    <property type="match status" value="1"/>
</dbReference>
<dbReference type="InterPro" id="IPR014720">
    <property type="entry name" value="dsRBD_dom"/>
</dbReference>
<dbReference type="InterPro" id="IPR011907">
    <property type="entry name" value="RNase_III"/>
</dbReference>
<dbReference type="InterPro" id="IPR000999">
    <property type="entry name" value="RNase_III_dom"/>
</dbReference>
<dbReference type="InterPro" id="IPR036389">
    <property type="entry name" value="RNase_III_sf"/>
</dbReference>
<dbReference type="NCBIfam" id="TIGR02191">
    <property type="entry name" value="RNaseIII"/>
    <property type="match status" value="1"/>
</dbReference>
<dbReference type="PANTHER" id="PTHR11207:SF0">
    <property type="entry name" value="RIBONUCLEASE 3"/>
    <property type="match status" value="1"/>
</dbReference>
<dbReference type="PANTHER" id="PTHR11207">
    <property type="entry name" value="RIBONUCLEASE III"/>
    <property type="match status" value="1"/>
</dbReference>
<dbReference type="Pfam" id="PF00035">
    <property type="entry name" value="dsrm"/>
    <property type="match status" value="1"/>
</dbReference>
<dbReference type="Pfam" id="PF14622">
    <property type="entry name" value="Ribonucleas_3_3"/>
    <property type="match status" value="1"/>
</dbReference>
<dbReference type="SMART" id="SM00358">
    <property type="entry name" value="DSRM"/>
    <property type="match status" value="1"/>
</dbReference>
<dbReference type="SMART" id="SM00535">
    <property type="entry name" value="RIBOc"/>
    <property type="match status" value="1"/>
</dbReference>
<dbReference type="SUPFAM" id="SSF54768">
    <property type="entry name" value="dsRNA-binding domain-like"/>
    <property type="match status" value="1"/>
</dbReference>
<dbReference type="SUPFAM" id="SSF69065">
    <property type="entry name" value="RNase III domain-like"/>
    <property type="match status" value="1"/>
</dbReference>
<dbReference type="PROSITE" id="PS50137">
    <property type="entry name" value="DS_RBD"/>
    <property type="match status" value="1"/>
</dbReference>
<dbReference type="PROSITE" id="PS00517">
    <property type="entry name" value="RNASE_3_1"/>
    <property type="match status" value="1"/>
</dbReference>
<dbReference type="PROSITE" id="PS50142">
    <property type="entry name" value="RNASE_3_2"/>
    <property type="match status" value="1"/>
</dbReference>
<feature type="chain" id="PRO_0000228603" description="Ribonuclease 3">
    <location>
        <begin position="1"/>
        <end position="243"/>
    </location>
</feature>
<feature type="domain" description="RNase III" evidence="1">
    <location>
        <begin position="15"/>
        <end position="144"/>
    </location>
</feature>
<feature type="domain" description="DRBM" evidence="1">
    <location>
        <begin position="169"/>
        <end position="238"/>
    </location>
</feature>
<feature type="active site" evidence="1">
    <location>
        <position position="61"/>
    </location>
</feature>
<feature type="active site" evidence="1">
    <location>
        <position position="133"/>
    </location>
</feature>
<feature type="binding site" evidence="1">
    <location>
        <position position="57"/>
    </location>
    <ligand>
        <name>Mg(2+)</name>
        <dbReference type="ChEBI" id="CHEBI:18420"/>
    </ligand>
</feature>
<feature type="binding site" evidence="1">
    <location>
        <position position="130"/>
    </location>
    <ligand>
        <name>Mg(2+)</name>
        <dbReference type="ChEBI" id="CHEBI:18420"/>
    </ligand>
</feature>
<feature type="binding site" evidence="1">
    <location>
        <position position="133"/>
    </location>
    <ligand>
        <name>Mg(2+)</name>
        <dbReference type="ChEBI" id="CHEBI:18420"/>
    </ligand>
</feature>
<comment type="function">
    <text evidence="1">Digests double-stranded RNA. Involved in the processing of primary rRNA transcript to yield the immediate precursors to the large and small rRNAs (23S and 16S). Processes some mRNAs, and tRNAs when they are encoded in the rRNA operon. Processes pre-crRNA and tracrRNA of type II CRISPR loci if present in the organism.</text>
</comment>
<comment type="catalytic activity">
    <reaction evidence="1">
        <text>Endonucleolytic cleavage to 5'-phosphomonoester.</text>
        <dbReference type="EC" id="3.1.26.3"/>
    </reaction>
</comment>
<comment type="cofactor">
    <cofactor evidence="1">
        <name>Mg(2+)</name>
        <dbReference type="ChEBI" id="CHEBI:18420"/>
    </cofactor>
</comment>
<comment type="subunit">
    <text evidence="1">Homodimer.</text>
</comment>
<comment type="subcellular location">
    <subcellularLocation>
        <location evidence="1">Cytoplasm</location>
    </subcellularLocation>
</comment>
<comment type="similarity">
    <text evidence="1">Belongs to the ribonuclease III family.</text>
</comment>
<keyword id="KW-0963">Cytoplasm</keyword>
<keyword id="KW-0255">Endonuclease</keyword>
<keyword id="KW-0378">Hydrolase</keyword>
<keyword id="KW-0460">Magnesium</keyword>
<keyword id="KW-0479">Metal-binding</keyword>
<keyword id="KW-0507">mRNA processing</keyword>
<keyword id="KW-0540">Nuclease</keyword>
<keyword id="KW-1185">Reference proteome</keyword>
<keyword id="KW-0694">RNA-binding</keyword>
<keyword id="KW-0698">rRNA processing</keyword>
<keyword id="KW-0699">rRNA-binding</keyword>
<keyword id="KW-0819">tRNA processing</keyword>
<accession>Q5GTI3</accession>
<reference key="1">
    <citation type="journal article" date="2005" name="PLoS Biol.">
        <title>The Wolbachia genome of Brugia malayi: endosymbiont evolution within a human pathogenic nematode.</title>
        <authorList>
            <person name="Foster J."/>
            <person name="Ganatra M."/>
            <person name="Kamal I."/>
            <person name="Ware J."/>
            <person name="Makarova K."/>
            <person name="Ivanova N."/>
            <person name="Bhattacharyya A."/>
            <person name="Kapatral V."/>
            <person name="Kumar S."/>
            <person name="Posfai J."/>
            <person name="Vincze T."/>
            <person name="Ingram J."/>
            <person name="Moran L."/>
            <person name="Lapidus A."/>
            <person name="Omelchenko M."/>
            <person name="Kyrpides N."/>
            <person name="Ghedin E."/>
            <person name="Wang S."/>
            <person name="Goltsman E."/>
            <person name="Joukov V."/>
            <person name="Ostrovskaya O."/>
            <person name="Tsukerman K."/>
            <person name="Mazur M."/>
            <person name="Comb D."/>
            <person name="Koonin E."/>
            <person name="Slatko B."/>
        </authorList>
    </citation>
    <scope>NUCLEOTIDE SEQUENCE [LARGE SCALE GENOMIC DNA]</scope>
    <source>
        <strain>TRS</strain>
    </source>
</reference>